<name>ES2IA_ODOIS</name>
<proteinExistence type="evidence at protein level"/>
<sequence>MFTLKKSLLLLFFLGTISLSVCKQERDADYEDKGEVEEVKRGIFSLIKGAAKLITKTVAKEAGKTGLELMACKVTNQC</sequence>
<evidence type="ECO:0000250" key="1">
    <source>
        <dbReference type="UniProtKB" id="B3A0M9"/>
    </source>
</evidence>
<evidence type="ECO:0000255" key="2"/>
<evidence type="ECO:0000269" key="3">
    <source>
    </source>
</evidence>
<evidence type="ECO:0000303" key="4">
    <source>
    </source>
</evidence>
<evidence type="ECO:0000305" key="5">
    <source>
    </source>
</evidence>
<evidence type="ECO:0000312" key="6">
    <source>
        <dbReference type="EMBL" id="BAK08583.1"/>
    </source>
</evidence>
<reference evidence="6" key="1">
    <citation type="journal article" date="2011" name="Peptides">
        <title>Identification and characterization of antimicrobial peptides from the skin of the endangered frog Odorrana ishikawae.</title>
        <authorList>
            <person name="Iwakoshi-Ukena E."/>
            <person name="Ukena K."/>
            <person name="Okimoto A."/>
            <person name="Soga M."/>
            <person name="Okada G."/>
            <person name="Sano N."/>
            <person name="Fujii T."/>
            <person name="Sugawara Y."/>
            <person name="Sumida M."/>
        </authorList>
    </citation>
    <scope>NUCLEOTIDE SEQUENCE [MRNA]</scope>
    <scope>PROTEIN SEQUENCE OF 42-78</scope>
    <scope>FUNCTION</scope>
    <scope>SYNTHESIS</scope>
    <scope>MASS SPECTROMETRY</scope>
    <source>
        <tissue evidence="4">Skin</tissue>
    </source>
</reference>
<organism evidence="4">
    <name type="scientific">Odorrana ishikawae</name>
    <name type="common">Ishikawa's frog</name>
    <name type="synonym">Rana ishikawae</name>
    <dbReference type="NCBI Taxonomy" id="310659"/>
    <lineage>
        <taxon>Eukaryota</taxon>
        <taxon>Metazoa</taxon>
        <taxon>Chordata</taxon>
        <taxon>Craniata</taxon>
        <taxon>Vertebrata</taxon>
        <taxon>Euteleostomi</taxon>
        <taxon>Amphibia</taxon>
        <taxon>Batrachia</taxon>
        <taxon>Anura</taxon>
        <taxon>Neobatrachia</taxon>
        <taxon>Ranoidea</taxon>
        <taxon>Ranidae</taxon>
        <taxon>Odorrana</taxon>
    </lineage>
</organism>
<keyword id="KW-0878">Amphibian defense peptide</keyword>
<keyword id="KW-0044">Antibiotic</keyword>
<keyword id="KW-0929">Antimicrobial</keyword>
<keyword id="KW-0165">Cleavage on pair of basic residues</keyword>
<keyword id="KW-0903">Direct protein sequencing</keyword>
<keyword id="KW-1015">Disulfide bond</keyword>
<keyword id="KW-0295">Fungicide</keyword>
<keyword id="KW-0964">Secreted</keyword>
<keyword id="KW-0732">Signal</keyword>
<accession>F1T151</accession>
<dbReference type="EMBL" id="AB602053">
    <property type="protein sequence ID" value="BAK08583.1"/>
    <property type="molecule type" value="mRNA"/>
</dbReference>
<dbReference type="GO" id="GO:0005576">
    <property type="term" value="C:extracellular region"/>
    <property type="evidence" value="ECO:0000314"/>
    <property type="project" value="UniProtKB"/>
</dbReference>
<dbReference type="GO" id="GO:0050832">
    <property type="term" value="P:defense response to fungus"/>
    <property type="evidence" value="ECO:0000314"/>
    <property type="project" value="UniProtKB"/>
</dbReference>
<dbReference type="GO" id="GO:0050829">
    <property type="term" value="P:defense response to Gram-negative bacterium"/>
    <property type="evidence" value="ECO:0000314"/>
    <property type="project" value="UniProtKB"/>
</dbReference>
<dbReference type="GO" id="GO:0050830">
    <property type="term" value="P:defense response to Gram-positive bacterium"/>
    <property type="evidence" value="ECO:0000314"/>
    <property type="project" value="UniProtKB"/>
</dbReference>
<dbReference type="GO" id="GO:0031640">
    <property type="term" value="P:killing of cells of another organism"/>
    <property type="evidence" value="ECO:0007669"/>
    <property type="project" value="UniProtKB-KW"/>
</dbReference>
<dbReference type="InterPro" id="IPR012521">
    <property type="entry name" value="Antimicrobial_frog_2"/>
</dbReference>
<dbReference type="InterPro" id="IPR004275">
    <property type="entry name" value="Frog_antimicrobial_propeptide"/>
</dbReference>
<dbReference type="Pfam" id="PF08023">
    <property type="entry name" value="Antimicrobial_2"/>
    <property type="match status" value="1"/>
</dbReference>
<dbReference type="Pfam" id="PF03032">
    <property type="entry name" value="FSAP_sig_propep"/>
    <property type="match status" value="1"/>
</dbReference>
<comment type="function">
    <text evidence="3">Has antimicrobial activity against Gram-negative bacterium E.coli ATCC 8739 (MIC=12.5 ug), against Gram positive bacteria S.aureus ATCC 6538 (MIC=3.1 ug), methicillin-resistant S.aureus ATCC 43300 (MIC=25 ug), B.subtilis ATCC 6633 (MIC=6.3 ug) and against fungus C.albicans ATCC 90028 (MIC=100 ug).</text>
</comment>
<comment type="subcellular location">
    <subcellularLocation>
        <location evidence="5">Secreted</location>
    </subcellularLocation>
</comment>
<comment type="tissue specificity">
    <text evidence="5">Expressed by the skin glands.</text>
</comment>
<comment type="mass spectrometry"/>
<comment type="similarity">
    <text evidence="2">Belongs to the frog skin active peptide (FSAP) family. Esculentin subfamily.</text>
</comment>
<comment type="online information" name="The antimicrobial peptide database">
    <link uri="https://wangapd3.com/database/query_output.php?ID=01705"/>
</comment>
<protein>
    <recommendedName>
        <fullName evidence="4">Esculentin-2ISa</fullName>
    </recommendedName>
</protein>
<feature type="signal peptide" evidence="2">
    <location>
        <begin position="1"/>
        <end position="22"/>
    </location>
</feature>
<feature type="propeptide" id="PRO_0000439611" description="Removed in mature form" evidence="5">
    <location>
        <begin position="23"/>
        <end position="39"/>
    </location>
</feature>
<feature type="peptide" id="PRO_0000439612" description="Esculentin-2ISa" evidence="3">
    <location>
        <begin position="42"/>
        <end position="78"/>
    </location>
</feature>
<feature type="disulfide bond" evidence="1">
    <location>
        <begin position="72"/>
        <end position="78"/>
    </location>
</feature>